<accession>Q9YMV2</accession>
<evidence type="ECO:0000250" key="1"/>
<evidence type="ECO:0000255" key="2">
    <source>
        <dbReference type="PROSITE-ProRule" id="PRU10135"/>
    </source>
</evidence>
<evidence type="ECO:0000256" key="3">
    <source>
        <dbReference type="SAM" id="MobiDB-lite"/>
    </source>
</evidence>
<evidence type="ECO:0000305" key="4"/>
<organismHost>
    <name type="scientific">Lepidoptera</name>
    <name type="common">butterflies and moths</name>
    <dbReference type="NCBI Taxonomy" id="7088"/>
</organismHost>
<reference key="1">
    <citation type="journal article" date="1999" name="Virology">
        <title>Sequence and analysis of the genome of a baculovirus pathogenic for Lymantria dispar.</title>
        <authorList>
            <person name="Kuzio J."/>
            <person name="Pearson M.N."/>
            <person name="Harwood S.H."/>
            <person name="Funk C.J."/>
            <person name="Evans J.T."/>
            <person name="Slavicek J.M."/>
            <person name="Rohrmann G.F."/>
        </authorList>
    </citation>
    <scope>NUCLEOTIDE SEQUENCE [GENOMIC DNA]</scope>
</reference>
<reference key="2">
    <citation type="journal article" date="1998" name="J. Virol.">
        <title>Characterization of a baculovirus-encoded ATP-dependent DNA ligase.</title>
        <authorList>
            <person name="Pearson M.N."/>
            <person name="Rohrmann G.F."/>
        </authorList>
    </citation>
    <scope>CHARACTERIZATION</scope>
</reference>
<sequence length="548" mass="61975">MENHDSFYKFCQLCQSLYDADDHQEKRDALERHFADFRGSAFMWRELLAPAESDAAADRELTLIFETILSIERTEQENVTRNLKCTIDGAAVPLSRESRITVPQVYEFINDLRGSGSRQERLRLIGQFAAGCTDEDLLTVFRVVSDHAHAGLSAEDVMELVEPWERFQKPVPPALAQPCRRLASVLVKHPEGALAEVKYDGERVQVHKAGSRFKFFSRTLKPVPEHKVAGCREHLTRAFPRARNFILDAEIVMVDGSGEALPFGTLGRLKQMEHADGHVCMYIFDCLRYNGVSYLNATPLDFRRRVLQDEIVPIEGRVVLSAMERTNTLSELRRFVHRTLATGAEGVVLKGRLSSYAPNKRDWFKMKKEHLCDGALVDTLDLVVLGAYYGTGRNCRKMSVFLMGCLDRESNVWTTVTKVHSGLADAALTALSKELRPLMAAPRDDLPEWFDCNESMVPHLLAADPEKMPVWEIACSEMKANIGAHTAGVTMRFPRVKRFRPDKDWSTATDLQEAEQLIRNSQENTKKTFARLATTYDGPSPNKKLKLN</sequence>
<dbReference type="EC" id="6.5.1.1" evidence="2"/>
<dbReference type="EMBL" id="AF081810">
    <property type="protein sequence ID" value="AAC70207.1"/>
    <property type="molecule type" value="Genomic_DNA"/>
</dbReference>
<dbReference type="PIR" id="T30369">
    <property type="entry name" value="T30369"/>
</dbReference>
<dbReference type="RefSeq" id="NP_047658.1">
    <property type="nucleotide sequence ID" value="NC_001973.1"/>
</dbReference>
<dbReference type="SMR" id="Q9YMV2"/>
<dbReference type="KEGG" id="vg:1488619"/>
<dbReference type="OrthoDB" id="3365at10239"/>
<dbReference type="BRENDA" id="6.5.1.1">
    <property type="organism ID" value="3111"/>
</dbReference>
<dbReference type="Proteomes" id="UP000203997">
    <property type="component" value="Genome"/>
</dbReference>
<dbReference type="GO" id="GO:0005524">
    <property type="term" value="F:ATP binding"/>
    <property type="evidence" value="ECO:0007669"/>
    <property type="project" value="UniProtKB-KW"/>
</dbReference>
<dbReference type="GO" id="GO:0003677">
    <property type="term" value="F:DNA binding"/>
    <property type="evidence" value="ECO:0007669"/>
    <property type="project" value="InterPro"/>
</dbReference>
<dbReference type="GO" id="GO:0003910">
    <property type="term" value="F:DNA ligase (ATP) activity"/>
    <property type="evidence" value="ECO:0007669"/>
    <property type="project" value="UniProtKB-EC"/>
</dbReference>
<dbReference type="GO" id="GO:0046872">
    <property type="term" value="F:metal ion binding"/>
    <property type="evidence" value="ECO:0007669"/>
    <property type="project" value="UniProtKB-KW"/>
</dbReference>
<dbReference type="GO" id="GO:0051301">
    <property type="term" value="P:cell division"/>
    <property type="evidence" value="ECO:0007669"/>
    <property type="project" value="UniProtKB-KW"/>
</dbReference>
<dbReference type="GO" id="GO:0071897">
    <property type="term" value="P:DNA biosynthetic process"/>
    <property type="evidence" value="ECO:0007669"/>
    <property type="project" value="InterPro"/>
</dbReference>
<dbReference type="GO" id="GO:0006310">
    <property type="term" value="P:DNA recombination"/>
    <property type="evidence" value="ECO:0007669"/>
    <property type="project" value="UniProtKB-KW"/>
</dbReference>
<dbReference type="GO" id="GO:0006302">
    <property type="term" value="P:double-strand break repair"/>
    <property type="evidence" value="ECO:0007669"/>
    <property type="project" value="TreeGrafter"/>
</dbReference>
<dbReference type="GO" id="GO:0006273">
    <property type="term" value="P:lagging strand elongation"/>
    <property type="evidence" value="ECO:0007669"/>
    <property type="project" value="TreeGrafter"/>
</dbReference>
<dbReference type="Gene3D" id="3.30.1490.70">
    <property type="match status" value="1"/>
</dbReference>
<dbReference type="Gene3D" id="1.10.3260.10">
    <property type="entry name" value="DNA ligase, ATP-dependent, N-terminal domain"/>
    <property type="match status" value="1"/>
</dbReference>
<dbReference type="Gene3D" id="3.30.470.30">
    <property type="entry name" value="DNA ligase/mRNA capping enzyme"/>
    <property type="match status" value="1"/>
</dbReference>
<dbReference type="Gene3D" id="2.40.50.140">
    <property type="entry name" value="Nucleic acid-binding proteins"/>
    <property type="match status" value="1"/>
</dbReference>
<dbReference type="InterPro" id="IPR050191">
    <property type="entry name" value="ATP-dep_DNA_ligase"/>
</dbReference>
<dbReference type="InterPro" id="IPR000977">
    <property type="entry name" value="DNA_ligase_ATP-dep"/>
</dbReference>
<dbReference type="InterPro" id="IPR012309">
    <property type="entry name" value="DNA_ligase_ATP-dep_C"/>
</dbReference>
<dbReference type="InterPro" id="IPR012310">
    <property type="entry name" value="DNA_ligase_ATP-dep_cent"/>
</dbReference>
<dbReference type="InterPro" id="IPR016059">
    <property type="entry name" value="DNA_ligase_ATP-dep_CS"/>
</dbReference>
<dbReference type="InterPro" id="IPR012308">
    <property type="entry name" value="DNA_ligase_ATP-dep_N"/>
</dbReference>
<dbReference type="InterPro" id="IPR036599">
    <property type="entry name" value="DNA_ligase_N_sf"/>
</dbReference>
<dbReference type="InterPro" id="IPR012340">
    <property type="entry name" value="NA-bd_OB-fold"/>
</dbReference>
<dbReference type="NCBIfam" id="TIGR00574">
    <property type="entry name" value="dnl1"/>
    <property type="match status" value="1"/>
</dbReference>
<dbReference type="PANTHER" id="PTHR45674">
    <property type="entry name" value="DNA LIGASE 1/3 FAMILY MEMBER"/>
    <property type="match status" value="1"/>
</dbReference>
<dbReference type="PANTHER" id="PTHR45674:SF9">
    <property type="entry name" value="DNA LIGASE 3"/>
    <property type="match status" value="1"/>
</dbReference>
<dbReference type="Pfam" id="PF04679">
    <property type="entry name" value="DNA_ligase_A_C"/>
    <property type="match status" value="1"/>
</dbReference>
<dbReference type="Pfam" id="PF01068">
    <property type="entry name" value="DNA_ligase_A_M"/>
    <property type="match status" value="1"/>
</dbReference>
<dbReference type="Pfam" id="PF04675">
    <property type="entry name" value="DNA_ligase_A_N"/>
    <property type="match status" value="1"/>
</dbReference>
<dbReference type="SUPFAM" id="SSF56091">
    <property type="entry name" value="DNA ligase/mRNA capping enzyme, catalytic domain"/>
    <property type="match status" value="1"/>
</dbReference>
<dbReference type="SUPFAM" id="SSF50249">
    <property type="entry name" value="Nucleic acid-binding proteins"/>
    <property type="match status" value="1"/>
</dbReference>
<dbReference type="PROSITE" id="PS00697">
    <property type="entry name" value="DNA_LIGASE_A1"/>
    <property type="match status" value="1"/>
</dbReference>
<dbReference type="PROSITE" id="PS50160">
    <property type="entry name" value="DNA_LIGASE_A3"/>
    <property type="match status" value="1"/>
</dbReference>
<gene>
    <name type="primary">LIG</name>
    <name type="ordered locus">LdOrf-22</name>
</gene>
<organism>
    <name type="scientific">Lymantria dispar multicapsid nuclear polyhedrosis virus</name>
    <name type="common">LdMNPV</name>
    <dbReference type="NCBI Taxonomy" id="10449"/>
    <lineage>
        <taxon>Viruses</taxon>
        <taxon>Viruses incertae sedis</taxon>
        <taxon>Naldaviricetes</taxon>
        <taxon>Lefavirales</taxon>
        <taxon>Baculoviridae</taxon>
        <taxon>Alphabaculovirus</taxon>
        <taxon>Alphabaculovirus lydisparis</taxon>
    </lineage>
</organism>
<comment type="function">
    <text>Able to ligate a double-stranded synthetic DNA substrate containing a single nick and inefficiently ligated a 1 nucleotide gap but did not ligate a 2 nucleotide gap. It is able to ligate short, complementary overhangs but not blunt-ended double-stranded DNA. May be implicated in DNA repair and recombination.</text>
</comment>
<comment type="catalytic activity">
    <reaction evidence="2">
        <text>ATP + (deoxyribonucleotide)n-3'-hydroxyl + 5'-phospho-(deoxyribonucleotide)m = (deoxyribonucleotide)n+m + AMP + diphosphate.</text>
        <dbReference type="EC" id="6.5.1.1"/>
    </reaction>
</comment>
<comment type="cofactor">
    <cofactor evidence="1">
        <name>a divalent metal cation</name>
        <dbReference type="ChEBI" id="CHEBI:60240"/>
    </cofactor>
</comment>
<comment type="similarity">
    <text evidence="4">Belongs to the ATP-dependent DNA ligase family.</text>
</comment>
<name>DNLI_NPVLD</name>
<proteinExistence type="evidence at protein level"/>
<protein>
    <recommendedName>
        <fullName>DNA ligase</fullName>
        <ecNumber evidence="2">6.5.1.1</ecNumber>
    </recommendedName>
    <alternativeName>
        <fullName>Polydeoxyribonucleotide synthase [ATP]</fullName>
    </alternativeName>
</protein>
<keyword id="KW-0067">ATP-binding</keyword>
<keyword id="KW-0131">Cell cycle</keyword>
<keyword id="KW-0132">Cell division</keyword>
<keyword id="KW-0227">DNA damage</keyword>
<keyword id="KW-0233">DNA recombination</keyword>
<keyword id="KW-0234">DNA repair</keyword>
<keyword id="KW-0235">DNA replication</keyword>
<keyword id="KW-0436">Ligase</keyword>
<keyword id="KW-0479">Metal-binding</keyword>
<keyword id="KW-0547">Nucleotide-binding</keyword>
<keyword id="KW-1185">Reference proteome</keyword>
<feature type="chain" id="PRO_0000059593" description="DNA ligase">
    <location>
        <begin position="1"/>
        <end position="548"/>
    </location>
</feature>
<feature type="region of interest" description="Disordered" evidence="3">
    <location>
        <begin position="515"/>
        <end position="548"/>
    </location>
</feature>
<feature type="active site" description="N6-AMP-lysine intermediate" evidence="2">
    <location>
        <position position="198"/>
    </location>
</feature>
<feature type="binding site" evidence="1">
    <location>
        <position position="196"/>
    </location>
    <ligand>
        <name>ATP</name>
        <dbReference type="ChEBI" id="CHEBI:30616"/>
    </ligand>
</feature>
<feature type="binding site" evidence="1">
    <location>
        <position position="203"/>
    </location>
    <ligand>
        <name>ATP</name>
        <dbReference type="ChEBI" id="CHEBI:30616"/>
    </ligand>
</feature>
<feature type="binding site" evidence="1">
    <location>
        <position position="218"/>
    </location>
    <ligand>
        <name>ATP</name>
        <dbReference type="ChEBI" id="CHEBI:30616"/>
    </ligand>
</feature>
<feature type="binding site" evidence="1">
    <location>
        <position position="250"/>
    </location>
    <ligand>
        <name>a divalent metal cation</name>
        <dbReference type="ChEBI" id="CHEBI:60240"/>
        <label>1</label>
    </ligand>
</feature>
<feature type="binding site" evidence="1">
    <location>
        <position position="250"/>
    </location>
    <ligand>
        <name>ATP</name>
        <dbReference type="ChEBI" id="CHEBI:30616"/>
    </ligand>
</feature>
<feature type="binding site" evidence="1">
    <location>
        <position position="284"/>
    </location>
    <ligand>
        <name>ATP</name>
        <dbReference type="ChEBI" id="CHEBI:30616"/>
    </ligand>
</feature>
<feature type="binding site" evidence="1">
    <location>
        <position position="345"/>
    </location>
    <ligand>
        <name>a divalent metal cation</name>
        <dbReference type="ChEBI" id="CHEBI:60240"/>
        <label>2</label>
    </ligand>
</feature>
<feature type="binding site" evidence="1">
    <location>
        <position position="361"/>
    </location>
    <ligand>
        <name>ATP</name>
        <dbReference type="ChEBI" id="CHEBI:30616"/>
    </ligand>
</feature>
<feature type="binding site" evidence="1">
    <location>
        <position position="365"/>
    </location>
    <ligand>
        <name>ATP</name>
        <dbReference type="ChEBI" id="CHEBI:30616"/>
    </ligand>
</feature>